<evidence type="ECO:0000250" key="1"/>
<evidence type="ECO:0000255" key="2">
    <source>
        <dbReference type="PROSITE-ProRule" id="PRU00176"/>
    </source>
</evidence>
<evidence type="ECO:0000255" key="3">
    <source>
        <dbReference type="PROSITE-ProRule" id="PRU00723"/>
    </source>
</evidence>
<evidence type="ECO:0000256" key="4">
    <source>
        <dbReference type="SAM" id="MobiDB-lite"/>
    </source>
</evidence>
<evidence type="ECO:0000305" key="5"/>
<keyword id="KW-0131">Cell cycle</keyword>
<keyword id="KW-0479">Metal-binding</keyword>
<keyword id="KW-0507">mRNA processing</keyword>
<keyword id="KW-0508">mRNA splicing</keyword>
<keyword id="KW-0539">Nucleus</keyword>
<keyword id="KW-1185">Reference proteome</keyword>
<keyword id="KW-0694">RNA-binding</keyword>
<keyword id="KW-0747">Spliceosome</keyword>
<keyword id="KW-0862">Zinc</keyword>
<keyword id="KW-0863">Zinc-finger</keyword>
<reference key="1">
    <citation type="journal article" date="2005" name="Nature">
        <title>The genome sequence of the rice blast fungus Magnaporthe grisea.</title>
        <authorList>
            <person name="Dean R.A."/>
            <person name="Talbot N.J."/>
            <person name="Ebbole D.J."/>
            <person name="Farman M.L."/>
            <person name="Mitchell T.K."/>
            <person name="Orbach M.J."/>
            <person name="Thon M.R."/>
            <person name="Kulkarni R."/>
            <person name="Xu J.-R."/>
            <person name="Pan H."/>
            <person name="Read N.D."/>
            <person name="Lee Y.-H."/>
            <person name="Carbone I."/>
            <person name="Brown D."/>
            <person name="Oh Y.Y."/>
            <person name="Donofrio N."/>
            <person name="Jeong J.S."/>
            <person name="Soanes D.M."/>
            <person name="Djonovic S."/>
            <person name="Kolomiets E."/>
            <person name="Rehmeyer C."/>
            <person name="Li W."/>
            <person name="Harding M."/>
            <person name="Kim S."/>
            <person name="Lebrun M.-H."/>
            <person name="Bohnert H."/>
            <person name="Coughlan S."/>
            <person name="Butler J."/>
            <person name="Calvo S.E."/>
            <person name="Ma L.-J."/>
            <person name="Nicol R."/>
            <person name="Purcell S."/>
            <person name="Nusbaum C."/>
            <person name="Galagan J.E."/>
            <person name="Birren B.W."/>
        </authorList>
    </citation>
    <scope>NUCLEOTIDE SEQUENCE [LARGE SCALE GENOMIC DNA]</scope>
    <source>
        <strain>70-15 / ATCC MYA-4617 / FGSC 8958</strain>
    </source>
</reference>
<dbReference type="EMBL" id="CM001231">
    <property type="protein sequence ID" value="EHA58459.1"/>
    <property type="molecule type" value="Genomic_DNA"/>
</dbReference>
<dbReference type="RefSeq" id="XP_003711071.1">
    <property type="nucleotide sequence ID" value="XM_003711023.1"/>
</dbReference>
<dbReference type="SMR" id="Q51TF7"/>
<dbReference type="FunCoup" id="Q51TF7">
    <property type="interactions" value="164"/>
</dbReference>
<dbReference type="STRING" id="242507.Q51TF7"/>
<dbReference type="EnsemblFungi" id="MGG_08641T0">
    <property type="protein sequence ID" value="MGG_08641T0"/>
    <property type="gene ID" value="MGG_08641"/>
</dbReference>
<dbReference type="GeneID" id="2678873"/>
<dbReference type="KEGG" id="mgr:MGG_08641"/>
<dbReference type="VEuPathDB" id="FungiDB:MGG_08641"/>
<dbReference type="eggNOG" id="KOG0118">
    <property type="taxonomic scope" value="Eukaryota"/>
</dbReference>
<dbReference type="HOGENOM" id="CLU_043308_1_0_1"/>
<dbReference type="InParanoid" id="Q51TF7"/>
<dbReference type="OMA" id="CNIAKDS"/>
<dbReference type="OrthoDB" id="10251848at2759"/>
<dbReference type="Proteomes" id="UP000009058">
    <property type="component" value="Chromosome 1"/>
</dbReference>
<dbReference type="GO" id="GO:0071014">
    <property type="term" value="C:post-mRNA release spliceosomal complex"/>
    <property type="evidence" value="ECO:0007669"/>
    <property type="project" value="EnsemblFungi"/>
</dbReference>
<dbReference type="GO" id="GO:0000974">
    <property type="term" value="C:Prp19 complex"/>
    <property type="evidence" value="ECO:0000250"/>
    <property type="project" value="UniProtKB"/>
</dbReference>
<dbReference type="GO" id="GO:0071006">
    <property type="term" value="C:U2-type catalytic step 1 spliceosome"/>
    <property type="evidence" value="ECO:0007669"/>
    <property type="project" value="TreeGrafter"/>
</dbReference>
<dbReference type="GO" id="GO:0071007">
    <property type="term" value="C:U2-type catalytic step 2 spliceosome"/>
    <property type="evidence" value="ECO:0007669"/>
    <property type="project" value="TreeGrafter"/>
</dbReference>
<dbReference type="GO" id="GO:0036002">
    <property type="term" value="F:pre-mRNA binding"/>
    <property type="evidence" value="ECO:0000250"/>
    <property type="project" value="UniProtKB"/>
</dbReference>
<dbReference type="GO" id="GO:0017070">
    <property type="term" value="F:U6 snRNA binding"/>
    <property type="evidence" value="ECO:0000250"/>
    <property type="project" value="UniProtKB"/>
</dbReference>
<dbReference type="GO" id="GO:0008270">
    <property type="term" value="F:zinc ion binding"/>
    <property type="evidence" value="ECO:0007669"/>
    <property type="project" value="UniProtKB-KW"/>
</dbReference>
<dbReference type="GO" id="GO:0045292">
    <property type="term" value="P:mRNA cis splicing, via spliceosome"/>
    <property type="evidence" value="ECO:0000250"/>
    <property type="project" value="UniProtKB"/>
</dbReference>
<dbReference type="GO" id="GO:0045787">
    <property type="term" value="P:positive regulation of cell cycle"/>
    <property type="evidence" value="ECO:0000250"/>
    <property type="project" value="UniProtKB"/>
</dbReference>
<dbReference type="GO" id="GO:0033120">
    <property type="term" value="P:positive regulation of RNA splicing"/>
    <property type="evidence" value="ECO:0000250"/>
    <property type="project" value="UniProtKB"/>
</dbReference>
<dbReference type="GO" id="GO:0000387">
    <property type="term" value="P:spliceosomal snRNP assembly"/>
    <property type="evidence" value="ECO:0000250"/>
    <property type="project" value="UniProtKB"/>
</dbReference>
<dbReference type="CDD" id="cd12360">
    <property type="entry name" value="RRM_cwf2"/>
    <property type="match status" value="1"/>
</dbReference>
<dbReference type="FunFam" id="3.30.70.330:FF:000249">
    <property type="entry name" value="Pre-mRNA-splicing factor CWC2, variant"/>
    <property type="match status" value="1"/>
</dbReference>
<dbReference type="Gene3D" id="3.30.70.330">
    <property type="match status" value="1"/>
</dbReference>
<dbReference type="InterPro" id="IPR039171">
    <property type="entry name" value="Cwc2/Slt11"/>
</dbReference>
<dbReference type="InterPro" id="IPR034181">
    <property type="entry name" value="Cwc2_RRM"/>
</dbReference>
<dbReference type="InterPro" id="IPR012677">
    <property type="entry name" value="Nucleotide-bd_a/b_plait_sf"/>
</dbReference>
<dbReference type="InterPro" id="IPR035979">
    <property type="entry name" value="RBD_domain_sf"/>
</dbReference>
<dbReference type="InterPro" id="IPR000504">
    <property type="entry name" value="RRM_dom"/>
</dbReference>
<dbReference type="InterPro" id="IPR032297">
    <property type="entry name" value="Torus"/>
</dbReference>
<dbReference type="InterPro" id="IPR000571">
    <property type="entry name" value="Znf_CCCH"/>
</dbReference>
<dbReference type="InterPro" id="IPR036855">
    <property type="entry name" value="Znf_CCCH_sf"/>
</dbReference>
<dbReference type="PANTHER" id="PTHR14089:SF2">
    <property type="entry name" value="PRE-MRNA-SPLICING FACTOR CWC2"/>
    <property type="match status" value="1"/>
</dbReference>
<dbReference type="PANTHER" id="PTHR14089">
    <property type="entry name" value="PRE-MRNA-SPLICING FACTOR RBM22"/>
    <property type="match status" value="1"/>
</dbReference>
<dbReference type="Pfam" id="PF00076">
    <property type="entry name" value="RRM_1"/>
    <property type="match status" value="1"/>
</dbReference>
<dbReference type="Pfam" id="PF16131">
    <property type="entry name" value="Torus"/>
    <property type="match status" value="1"/>
</dbReference>
<dbReference type="SMART" id="SM00360">
    <property type="entry name" value="RRM"/>
    <property type="match status" value="1"/>
</dbReference>
<dbReference type="SUPFAM" id="SSF90229">
    <property type="entry name" value="CCCH zinc finger"/>
    <property type="match status" value="1"/>
</dbReference>
<dbReference type="SUPFAM" id="SSF54928">
    <property type="entry name" value="RNA-binding domain, RBD"/>
    <property type="match status" value="1"/>
</dbReference>
<dbReference type="PROSITE" id="PS50102">
    <property type="entry name" value="RRM"/>
    <property type="match status" value="1"/>
</dbReference>
<dbReference type="PROSITE" id="PS50103">
    <property type="entry name" value="ZF_C3H1"/>
    <property type="match status" value="1"/>
</dbReference>
<feature type="chain" id="PRO_0000081548" description="Pre-mRNA-splicing factor CWC2">
    <location>
        <begin position="1"/>
        <end position="394"/>
    </location>
</feature>
<feature type="domain" description="RRM" evidence="2">
    <location>
        <begin position="167"/>
        <end position="241"/>
    </location>
</feature>
<feature type="zinc finger region" description="C3H1-type" evidence="3">
    <location>
        <begin position="104"/>
        <end position="131"/>
    </location>
</feature>
<feature type="region of interest" description="Disordered" evidence="4">
    <location>
        <begin position="1"/>
        <end position="59"/>
    </location>
</feature>
<feature type="region of interest" description="Disordered" evidence="4">
    <location>
        <begin position="373"/>
        <end position="394"/>
    </location>
</feature>
<feature type="compositionally biased region" description="Basic residues" evidence="4">
    <location>
        <begin position="30"/>
        <end position="43"/>
    </location>
</feature>
<protein>
    <recommendedName>
        <fullName>Pre-mRNA-splicing factor CWC2</fullName>
    </recommendedName>
</protein>
<proteinExistence type="inferred from homology"/>
<accession>Q51TF7</accession>
<accession>A4QSC1</accession>
<accession>G4ML32</accession>
<organism>
    <name type="scientific">Pyricularia oryzae (strain 70-15 / ATCC MYA-4617 / FGSC 8958)</name>
    <name type="common">Rice blast fungus</name>
    <name type="synonym">Magnaporthe oryzae</name>
    <dbReference type="NCBI Taxonomy" id="242507"/>
    <lineage>
        <taxon>Eukaryota</taxon>
        <taxon>Fungi</taxon>
        <taxon>Dikarya</taxon>
        <taxon>Ascomycota</taxon>
        <taxon>Pezizomycotina</taxon>
        <taxon>Sordariomycetes</taxon>
        <taxon>Sordariomycetidae</taxon>
        <taxon>Magnaporthales</taxon>
        <taxon>Pyriculariaceae</taxon>
        <taxon>Pyricularia</taxon>
    </lineage>
</organism>
<comment type="function">
    <text evidence="1">Involved in the first step of pre-mRNA splicing. Required for cell growth and cell cycle control. Plays a role in the levels of the U1, U4, U5 and U6 snRNAs and the maintenance of the U4/U6 snRNA complex. May provide the link between the 'nineteen complex' NTC spliceosome protein complex and the spliceosome through the U6 snRNA. Associates predominantly with U6 snRNAs in assembled active spliceosomes. Binds directly to the internal stem-loop (ISL) domain of the U6 snRNA and to the pre-mRNA intron near the 5' splice site during the activation and catalytic phases of the spliceosome cycle (By similarity).</text>
</comment>
<comment type="subunit">
    <text evidence="1">Associated with the spliceosome.</text>
</comment>
<comment type="subcellular location">
    <subcellularLocation>
        <location evidence="1">Nucleus</location>
    </subcellularLocation>
</comment>
<comment type="domain">
    <text evidence="1">The C-terminal RRM domain and the zinc finger motif are necessary for RNA-binding.</text>
</comment>
<comment type="similarity">
    <text evidence="5">Belongs to the RRM CWC2 family.</text>
</comment>
<gene>
    <name type="primary">CWC2</name>
    <name type="ORF">MGG_08641</name>
</gene>
<name>CWC2_PYRO7</name>
<sequence length="394" mass="43256">MSDTEQPQAAEGTELVPTSNGPVVPEGQKKVKKIIRVKKKRPARPQIDPALVKSEPPPQTGTTFNIWYNKWSGGDREDKYTSQTAAKGRCNVAKDSGYTKADQTTGSYFCLFFARGVCPKGQDCEYLHRLPTLHDLYSPNVDCFGRDRFSDYRDDMGGVGSFMRQNRTVYVGRIHVTDDIEEVVARHFAEWGQVERIRVLNQRGVAFITYTNEANAQFAKEAMAHQSLDHNEILNVRWATADPNPMAQAREARRVEEQAAEAVRRALPAEFVAEIEGRDPEARKRRKMESSYGLDGYEAPDEVHFARGAQAVNPVGRRGFEDQLMLEGGGEEVSAREALFGAEGSGSGDGDAGGIFSSSTLAALNSAQVKVSAQPKQAAATGPLVAYGSDSEDD</sequence>